<evidence type="ECO:0000250" key="1">
    <source>
        <dbReference type="UniProtKB" id="P9WJE9"/>
    </source>
</evidence>
<evidence type="ECO:0000255" key="2"/>
<evidence type="ECO:0000305" key="3"/>
<reference key="1">
    <citation type="journal article" date="2002" name="J. Bacteriol.">
        <title>Whole-genome comparison of Mycobacterium tuberculosis clinical and laboratory strains.</title>
        <authorList>
            <person name="Fleischmann R.D."/>
            <person name="Alland D."/>
            <person name="Eisen J.A."/>
            <person name="Carpenter L."/>
            <person name="White O."/>
            <person name="Peterson J.D."/>
            <person name="DeBoy R.T."/>
            <person name="Dodson R.J."/>
            <person name="Gwinn M.L."/>
            <person name="Haft D.H."/>
            <person name="Hickey E.K."/>
            <person name="Kolonay J.F."/>
            <person name="Nelson W.C."/>
            <person name="Umayam L.A."/>
            <person name="Ermolaeva M.D."/>
            <person name="Salzberg S.L."/>
            <person name="Delcher A."/>
            <person name="Utterback T.R."/>
            <person name="Weidman J.F."/>
            <person name="Khouri H.M."/>
            <person name="Gill J."/>
            <person name="Mikula A."/>
            <person name="Bishai W."/>
            <person name="Jacobs W.R. Jr."/>
            <person name="Venter J.C."/>
            <person name="Fraser C.M."/>
        </authorList>
    </citation>
    <scope>NUCLEOTIDE SEQUENCE [LARGE SCALE GENOMIC DNA]</scope>
    <source>
        <strain>CDC 1551 / Oshkosh</strain>
    </source>
</reference>
<accession>P9WJE8</accession>
<accession>L0TGW4</accession>
<accession>O05462</accession>
<accession>Q7D4N9</accession>
<gene>
    <name evidence="1" type="primary">eccE1</name>
    <name type="synonym">snm7</name>
    <name type="ordered locus">MT3997</name>
</gene>
<name>ECCE1_MYCTO</name>
<proteinExistence type="inferred from homology"/>
<keyword id="KW-0997">Cell inner membrane</keyword>
<keyword id="KW-1003">Cell membrane</keyword>
<keyword id="KW-0472">Membrane</keyword>
<keyword id="KW-1185">Reference proteome</keyword>
<keyword id="KW-0812">Transmembrane</keyword>
<keyword id="KW-1133">Transmembrane helix</keyword>
<keyword id="KW-0813">Transport</keyword>
<sequence length="462" mass="50397">MRNPLGLRFSTGHALLASALAPPCIIAFLETRYWWAGIALASLGVIVATVTFYGRRITGWVAAVYAWLRRRRRPPDSSSEPVVGATVKPGDHVAVRWQGEFLVAVIELIPRPFTPTVIVDGQAHTDDMLDTGLVEELLSVHCPDLEADIVSAGYRVGNTAAPDVVSLYQQVIGTDPAPANRRTWIVLRADPERTRKSAQRRDEGVAGLARYLVASATRIADRLASHGVDAVCGRSFDDYDHATDIGFVREKWSMIKGRDAYTAAYAAPGGPDVWWSARADHTITRVRVAPGMAPQSTVLLTTADKPKTPRGFARLFGGQRPALQGQHLVANRHCQLPIGSAGVLVGETVNRCPVYMPFDDVDIALNLGDAQTFTQFVVRAAAAGAMVTVGPQFEEFARLIGAHIGQEVKVAWPNATTYLGPHPGIDRVILRHNVIGTPRHRQLPIRRVSPPEESRYQMALPK</sequence>
<comment type="function">
    <text evidence="1">Part of the ESX-1 specialized secretion system, which delivers several virulence factors to host cells during infection, including the key virulence factors EsxA (ESAT-6) and EsxB (CFP-10).</text>
</comment>
<comment type="subunit">
    <text evidence="1">Part of the ESX-1 / type VII secretion system (T7SS), which is composed of cytosolic and membrane components. The ESX-1 membrane complex is composed of EccB1, EccCa1, EccCb1, EccD1 and EccE1.</text>
</comment>
<comment type="subcellular location">
    <subcellularLocation>
        <location evidence="1">Cell inner membrane</location>
        <topology evidence="2">Multi-pass membrane protein</topology>
    </subcellularLocation>
</comment>
<comment type="similarity">
    <text evidence="3">Belongs to the EccE family.</text>
</comment>
<dbReference type="EMBL" id="AE000516">
    <property type="protein sequence ID" value="AAK48365.1"/>
    <property type="molecule type" value="Genomic_DNA"/>
</dbReference>
<dbReference type="PIR" id="C70597">
    <property type="entry name" value="C70597"/>
</dbReference>
<dbReference type="RefSeq" id="WP_003400000.1">
    <property type="nucleotide sequence ID" value="NZ_KK341228.1"/>
</dbReference>
<dbReference type="GeneID" id="45427885"/>
<dbReference type="KEGG" id="mtc:MT3997"/>
<dbReference type="PATRIC" id="fig|83331.31.peg.4301"/>
<dbReference type="HOGENOM" id="CLU_587698_0_0_11"/>
<dbReference type="Proteomes" id="UP000001020">
    <property type="component" value="Chromosome"/>
</dbReference>
<dbReference type="GO" id="GO:0005886">
    <property type="term" value="C:plasma membrane"/>
    <property type="evidence" value="ECO:0007669"/>
    <property type="project" value="UniProtKB-SubCell"/>
</dbReference>
<dbReference type="InterPro" id="IPR050051">
    <property type="entry name" value="EccE_dom"/>
</dbReference>
<dbReference type="InterPro" id="IPR021368">
    <property type="entry name" value="T7SS_EccE"/>
</dbReference>
<dbReference type="NCBIfam" id="TIGR03923">
    <property type="entry name" value="T7SS_EccE"/>
    <property type="match status" value="1"/>
</dbReference>
<dbReference type="Pfam" id="PF11203">
    <property type="entry name" value="EccE"/>
    <property type="match status" value="1"/>
</dbReference>
<protein>
    <recommendedName>
        <fullName evidence="1">ESX-1 secretion system protein EccE1</fullName>
    </recommendedName>
    <alternativeName>
        <fullName evidence="1">ESX conserved component E1</fullName>
    </alternativeName>
    <alternativeName>
        <fullName evidence="1">Type VII secretion system protein EccE1</fullName>
        <shortName evidence="1">T7SS protein EccE1</shortName>
    </alternativeName>
</protein>
<organism>
    <name type="scientific">Mycobacterium tuberculosis (strain CDC 1551 / Oshkosh)</name>
    <dbReference type="NCBI Taxonomy" id="83331"/>
    <lineage>
        <taxon>Bacteria</taxon>
        <taxon>Bacillati</taxon>
        <taxon>Actinomycetota</taxon>
        <taxon>Actinomycetes</taxon>
        <taxon>Mycobacteriales</taxon>
        <taxon>Mycobacteriaceae</taxon>
        <taxon>Mycobacterium</taxon>
        <taxon>Mycobacterium tuberculosis complex</taxon>
    </lineage>
</organism>
<feature type="chain" id="PRO_0000427842" description="ESX-1 secretion system protein EccE1">
    <location>
        <begin position="1"/>
        <end position="462"/>
    </location>
</feature>
<feature type="transmembrane region" description="Helical" evidence="2">
    <location>
        <begin position="9"/>
        <end position="29"/>
    </location>
</feature>
<feature type="transmembrane region" description="Helical" evidence="2">
    <location>
        <begin position="34"/>
        <end position="54"/>
    </location>
</feature>